<feature type="chain" id="PRO_0000422111" description="Diacylglycerol kinase 3">
    <location>
        <begin position="1"/>
        <end position="488"/>
    </location>
</feature>
<feature type="domain" description="DAGKc" evidence="2">
    <location>
        <begin position="87"/>
        <end position="245"/>
    </location>
</feature>
<feature type="region of interest" description="Disordered" evidence="3">
    <location>
        <begin position="1"/>
        <end position="24"/>
    </location>
</feature>
<comment type="function">
    <text evidence="1">Phosphorylates the second messenger diacylglycerol (DAG) to generate phosphatidic acid (PA), another important signaling molecule. PA is required for plant development and responses to abiotic stress and pathogen attack. May be involved in the accumulation of PA during cold stress (By similarity).</text>
</comment>
<comment type="catalytic activity">
    <reaction>
        <text>a 1,2-diacyl-sn-glycerol + ATP = a 1,2-diacyl-sn-glycero-3-phosphate + ADP + H(+)</text>
        <dbReference type="Rhea" id="RHEA:10272"/>
        <dbReference type="ChEBI" id="CHEBI:15378"/>
        <dbReference type="ChEBI" id="CHEBI:17815"/>
        <dbReference type="ChEBI" id="CHEBI:30616"/>
        <dbReference type="ChEBI" id="CHEBI:58608"/>
        <dbReference type="ChEBI" id="CHEBI:456216"/>
        <dbReference type="EC" id="2.7.1.107"/>
    </reaction>
</comment>
<comment type="subunit">
    <text evidence="1">Monomer.</text>
</comment>
<comment type="interaction">
    <interactant intactId="EBI-4441630">
        <id>Q8VZG1</id>
    </interactant>
    <interactant intactId="EBI-349548">
        <id>Q39026</id>
        <label>MPK6</label>
    </interactant>
    <organismsDiffer>false</organismsDiffer>
    <experiments>4</experiments>
</comment>
<comment type="similarity">
    <text evidence="4">Belongs to the eukaryotic diacylglycerol kinase family.</text>
</comment>
<comment type="sequence caution" evidence="4">
    <conflict type="erroneous gene model prediction">
        <sequence resource="EMBL-CDS" id="AAD08942"/>
    </conflict>
</comment>
<sequence length="488" mass="53881">MDSPVSKTDASKEKFVASRPSTADSKTMRGCGLANLAWVGVDKVELRQRLMMPEYLRLAMRDCIKRKDSSAIPDHLLLPGGAVADMAPHAPMVVFINPNSGGRHGPVLKERLQQLMSEEQVFDLTEVKPHEFVRYGLGCLEKVAAEGDECAKECRARLRIMVAGGDGTVGWVLGCLGELNKDGKSQIPPVGVIPLGTGNDLSRSFGWGGSFPFAWRSAVKRTLHRASMGPVARLDSWKILVSMPSGEVVDPPYSLKPAEENELDQGLDAGIDAPPLAKAYEGVFYNYLSIGMDAQVAYGFHHLRNTKPYLAQGPISNKIIYSSFGCSQGWFCTPCVNDPGLRGLRNIMKIHIKKVNCSQWEEIAVPKNVRSIVALNLHSYGSGSHPWGNLKPDYLEKRGFVEAHCDDGLIEIFGFKQGWHASFVMAELISAKHIAQAAAVRFELRGGDWRDAFLQMDGEPWKQPMSTEYSTFVEIKKVPYQSLMINNE</sequence>
<keyword id="KW-0067">ATP-binding</keyword>
<keyword id="KW-0418">Kinase</keyword>
<keyword id="KW-0547">Nucleotide-binding</keyword>
<keyword id="KW-0611">Plant defense</keyword>
<keyword id="KW-1185">Reference proteome</keyword>
<keyword id="KW-0346">Stress response</keyword>
<keyword id="KW-0808">Transferase</keyword>
<proteinExistence type="evidence at protein level"/>
<organism>
    <name type="scientific">Arabidopsis thaliana</name>
    <name type="common">Mouse-ear cress</name>
    <dbReference type="NCBI Taxonomy" id="3702"/>
    <lineage>
        <taxon>Eukaryota</taxon>
        <taxon>Viridiplantae</taxon>
        <taxon>Streptophyta</taxon>
        <taxon>Embryophyta</taxon>
        <taxon>Tracheophyta</taxon>
        <taxon>Spermatophyta</taxon>
        <taxon>Magnoliopsida</taxon>
        <taxon>eudicotyledons</taxon>
        <taxon>Gunneridae</taxon>
        <taxon>Pentapetalae</taxon>
        <taxon>rosids</taxon>
        <taxon>malvids</taxon>
        <taxon>Brassicales</taxon>
        <taxon>Brassicaceae</taxon>
        <taxon>Camelineae</taxon>
        <taxon>Arabidopsis</taxon>
    </lineage>
</organism>
<gene>
    <name type="primary">DGK3</name>
    <name type="ordered locus">At2g18730</name>
    <name type="ORF">MSF3.11</name>
</gene>
<evidence type="ECO:0000250" key="1"/>
<evidence type="ECO:0000255" key="2">
    <source>
        <dbReference type="PROSITE-ProRule" id="PRU00783"/>
    </source>
</evidence>
<evidence type="ECO:0000256" key="3">
    <source>
        <dbReference type="SAM" id="MobiDB-lite"/>
    </source>
</evidence>
<evidence type="ECO:0000305" key="4"/>
<name>DGK3_ARATH</name>
<dbReference type="EC" id="2.7.1.107"/>
<dbReference type="EMBL" id="AC005724">
    <property type="protein sequence ID" value="AAD08942.1"/>
    <property type="status" value="ALT_SEQ"/>
    <property type="molecule type" value="Genomic_DNA"/>
</dbReference>
<dbReference type="EMBL" id="CP002685">
    <property type="protein sequence ID" value="AEC06799.1"/>
    <property type="molecule type" value="Genomic_DNA"/>
</dbReference>
<dbReference type="EMBL" id="AY064982">
    <property type="protein sequence ID" value="AAL57635.1"/>
    <property type="molecule type" value="mRNA"/>
</dbReference>
<dbReference type="EMBL" id="AY141990">
    <property type="protein sequence ID" value="AAM98254.1"/>
    <property type="molecule type" value="mRNA"/>
</dbReference>
<dbReference type="PIR" id="H84567">
    <property type="entry name" value="H84567"/>
</dbReference>
<dbReference type="RefSeq" id="NP_849980.1">
    <property type="nucleotide sequence ID" value="NM_179649.4"/>
</dbReference>
<dbReference type="BioGRID" id="1745">
    <property type="interactions" value="7"/>
</dbReference>
<dbReference type="FunCoup" id="Q8VZG1">
    <property type="interactions" value="297"/>
</dbReference>
<dbReference type="IntAct" id="Q8VZG1">
    <property type="interactions" value="7"/>
</dbReference>
<dbReference type="STRING" id="3702.Q8VZG1"/>
<dbReference type="iPTMnet" id="Q8VZG1"/>
<dbReference type="SwissPalm" id="Q8VZG1"/>
<dbReference type="PaxDb" id="3702-AT2G18730.1"/>
<dbReference type="ProteomicsDB" id="224037"/>
<dbReference type="EnsemblPlants" id="AT2G18730.1">
    <property type="protein sequence ID" value="AT2G18730.1"/>
    <property type="gene ID" value="AT2G18730"/>
</dbReference>
<dbReference type="GeneID" id="816388"/>
<dbReference type="Gramene" id="AT2G18730.1">
    <property type="protein sequence ID" value="AT2G18730.1"/>
    <property type="gene ID" value="AT2G18730"/>
</dbReference>
<dbReference type="KEGG" id="ath:AT2G18730"/>
<dbReference type="Araport" id="AT2G18730"/>
<dbReference type="TAIR" id="AT2G18730">
    <property type="gene designation" value="DGK3"/>
</dbReference>
<dbReference type="eggNOG" id="KOG1169">
    <property type="taxonomic scope" value="Eukaryota"/>
</dbReference>
<dbReference type="HOGENOM" id="CLU_002706_46_3_1"/>
<dbReference type="InParanoid" id="Q8VZG1"/>
<dbReference type="OMA" id="WKQPMNT"/>
<dbReference type="PhylomeDB" id="Q8VZG1"/>
<dbReference type="BioCyc" id="ARA:AT2G18730-MONOMER"/>
<dbReference type="PRO" id="PR:Q8VZG1"/>
<dbReference type="Proteomes" id="UP000006548">
    <property type="component" value="Chromosome 2"/>
</dbReference>
<dbReference type="ExpressionAtlas" id="Q8VZG1">
    <property type="expression patterns" value="baseline and differential"/>
</dbReference>
<dbReference type="GO" id="GO:0009506">
    <property type="term" value="C:plasmodesma"/>
    <property type="evidence" value="ECO:0007005"/>
    <property type="project" value="TAIR"/>
</dbReference>
<dbReference type="GO" id="GO:0005524">
    <property type="term" value="F:ATP binding"/>
    <property type="evidence" value="ECO:0007669"/>
    <property type="project" value="UniProtKB-KW"/>
</dbReference>
<dbReference type="GO" id="GO:0004143">
    <property type="term" value="F:ATP-dependent diacylglycerol kinase activity"/>
    <property type="evidence" value="ECO:0007669"/>
    <property type="project" value="UniProtKB-EC"/>
</dbReference>
<dbReference type="GO" id="GO:0006952">
    <property type="term" value="P:defense response"/>
    <property type="evidence" value="ECO:0007669"/>
    <property type="project" value="UniProtKB-KW"/>
</dbReference>
<dbReference type="GO" id="GO:0007200">
    <property type="term" value="P:phospholipase C-activating G protein-coupled receptor signaling pathway"/>
    <property type="evidence" value="ECO:0007669"/>
    <property type="project" value="InterPro"/>
</dbReference>
<dbReference type="FunFam" id="2.60.200.40:FF:000011">
    <property type="entry name" value="diacylglycerol kinase"/>
    <property type="match status" value="1"/>
</dbReference>
<dbReference type="FunFam" id="3.40.50.10330:FF:000023">
    <property type="entry name" value="diacylglycerol kinase"/>
    <property type="match status" value="1"/>
</dbReference>
<dbReference type="Gene3D" id="2.60.200.40">
    <property type="match status" value="1"/>
</dbReference>
<dbReference type="Gene3D" id="3.40.50.10330">
    <property type="entry name" value="Probable inorganic polyphosphate/atp-NAD kinase, domain 1"/>
    <property type="match status" value="1"/>
</dbReference>
<dbReference type="InterPro" id="IPR017438">
    <property type="entry name" value="ATP-NAD_kinase_N"/>
</dbReference>
<dbReference type="InterPro" id="IPR037607">
    <property type="entry name" value="DGK"/>
</dbReference>
<dbReference type="InterPro" id="IPR000756">
    <property type="entry name" value="Diacylglycerol_kin_accessory"/>
</dbReference>
<dbReference type="InterPro" id="IPR001206">
    <property type="entry name" value="Diacylglycerol_kinase_cat_dom"/>
</dbReference>
<dbReference type="InterPro" id="IPR016961">
    <property type="entry name" value="Diacylglycerol_kinase_pln"/>
</dbReference>
<dbReference type="InterPro" id="IPR016064">
    <property type="entry name" value="NAD/diacylglycerol_kinase_sf"/>
</dbReference>
<dbReference type="PANTHER" id="PTHR11255">
    <property type="entry name" value="DIACYLGLYCEROL KINASE"/>
    <property type="match status" value="1"/>
</dbReference>
<dbReference type="PANTHER" id="PTHR11255:SF106">
    <property type="entry name" value="DIACYLGLYCEROL KINASE 3"/>
    <property type="match status" value="1"/>
</dbReference>
<dbReference type="Pfam" id="PF00609">
    <property type="entry name" value="DAGK_acc"/>
    <property type="match status" value="1"/>
</dbReference>
<dbReference type="Pfam" id="PF00781">
    <property type="entry name" value="DAGK_cat"/>
    <property type="match status" value="1"/>
</dbReference>
<dbReference type="PIRSF" id="PIRSF030829">
    <property type="entry name" value="Diacylglycerol_kinase_pln"/>
    <property type="match status" value="1"/>
</dbReference>
<dbReference type="SMART" id="SM00045">
    <property type="entry name" value="DAGKa"/>
    <property type="match status" value="1"/>
</dbReference>
<dbReference type="SMART" id="SM00046">
    <property type="entry name" value="DAGKc"/>
    <property type="match status" value="1"/>
</dbReference>
<dbReference type="SUPFAM" id="SSF111331">
    <property type="entry name" value="NAD kinase/diacylglycerol kinase-like"/>
    <property type="match status" value="1"/>
</dbReference>
<dbReference type="PROSITE" id="PS50146">
    <property type="entry name" value="DAGK"/>
    <property type="match status" value="1"/>
</dbReference>
<reference key="1">
    <citation type="journal article" date="1999" name="Nature">
        <title>Sequence and analysis of chromosome 2 of the plant Arabidopsis thaliana.</title>
        <authorList>
            <person name="Lin X."/>
            <person name="Kaul S."/>
            <person name="Rounsley S.D."/>
            <person name="Shea T.P."/>
            <person name="Benito M.-I."/>
            <person name="Town C.D."/>
            <person name="Fujii C.Y."/>
            <person name="Mason T.M."/>
            <person name="Bowman C.L."/>
            <person name="Barnstead M.E."/>
            <person name="Feldblyum T.V."/>
            <person name="Buell C.R."/>
            <person name="Ketchum K.A."/>
            <person name="Lee J.J."/>
            <person name="Ronning C.M."/>
            <person name="Koo H.L."/>
            <person name="Moffat K.S."/>
            <person name="Cronin L.A."/>
            <person name="Shen M."/>
            <person name="Pai G."/>
            <person name="Van Aken S."/>
            <person name="Umayam L."/>
            <person name="Tallon L.J."/>
            <person name="Gill J.E."/>
            <person name="Adams M.D."/>
            <person name="Carrera A.J."/>
            <person name="Creasy T.H."/>
            <person name="Goodman H.M."/>
            <person name="Somerville C.R."/>
            <person name="Copenhaver G.P."/>
            <person name="Preuss D."/>
            <person name="Nierman W.C."/>
            <person name="White O."/>
            <person name="Eisen J.A."/>
            <person name="Salzberg S.L."/>
            <person name="Fraser C.M."/>
            <person name="Venter J.C."/>
        </authorList>
    </citation>
    <scope>NUCLEOTIDE SEQUENCE [LARGE SCALE GENOMIC DNA]</scope>
    <source>
        <strain>cv. Columbia</strain>
    </source>
</reference>
<reference key="2">
    <citation type="journal article" date="2017" name="Plant J.">
        <title>Araport11: a complete reannotation of the Arabidopsis thaliana reference genome.</title>
        <authorList>
            <person name="Cheng C.Y."/>
            <person name="Krishnakumar V."/>
            <person name="Chan A.P."/>
            <person name="Thibaud-Nissen F."/>
            <person name="Schobel S."/>
            <person name="Town C.D."/>
        </authorList>
    </citation>
    <scope>GENOME REANNOTATION</scope>
    <source>
        <strain>cv. Columbia</strain>
    </source>
</reference>
<reference key="3">
    <citation type="journal article" date="2003" name="Science">
        <title>Empirical analysis of transcriptional activity in the Arabidopsis genome.</title>
        <authorList>
            <person name="Yamada K."/>
            <person name="Lim J."/>
            <person name="Dale J.M."/>
            <person name="Chen H."/>
            <person name="Shinn P."/>
            <person name="Palm C.J."/>
            <person name="Southwick A.M."/>
            <person name="Wu H.C."/>
            <person name="Kim C.J."/>
            <person name="Nguyen M."/>
            <person name="Pham P.K."/>
            <person name="Cheuk R.F."/>
            <person name="Karlin-Newmann G."/>
            <person name="Liu S.X."/>
            <person name="Lam B."/>
            <person name="Sakano H."/>
            <person name="Wu T."/>
            <person name="Yu G."/>
            <person name="Miranda M."/>
            <person name="Quach H.L."/>
            <person name="Tripp M."/>
            <person name="Chang C.H."/>
            <person name="Lee J.M."/>
            <person name="Toriumi M.J."/>
            <person name="Chan M.M."/>
            <person name="Tang C.C."/>
            <person name="Onodera C.S."/>
            <person name="Deng J.M."/>
            <person name="Akiyama K."/>
            <person name="Ansari Y."/>
            <person name="Arakawa T."/>
            <person name="Banh J."/>
            <person name="Banno F."/>
            <person name="Bowser L."/>
            <person name="Brooks S.Y."/>
            <person name="Carninci P."/>
            <person name="Chao Q."/>
            <person name="Choy N."/>
            <person name="Enju A."/>
            <person name="Goldsmith A.D."/>
            <person name="Gurjal M."/>
            <person name="Hansen N.F."/>
            <person name="Hayashizaki Y."/>
            <person name="Johnson-Hopson C."/>
            <person name="Hsuan V.W."/>
            <person name="Iida K."/>
            <person name="Karnes M."/>
            <person name="Khan S."/>
            <person name="Koesema E."/>
            <person name="Ishida J."/>
            <person name="Jiang P.X."/>
            <person name="Jones T."/>
            <person name="Kawai J."/>
            <person name="Kamiya A."/>
            <person name="Meyers C."/>
            <person name="Nakajima M."/>
            <person name="Narusaka M."/>
            <person name="Seki M."/>
            <person name="Sakurai T."/>
            <person name="Satou M."/>
            <person name="Tamse R."/>
            <person name="Vaysberg M."/>
            <person name="Wallender E.K."/>
            <person name="Wong C."/>
            <person name="Yamamura Y."/>
            <person name="Yuan S."/>
            <person name="Shinozaki K."/>
            <person name="Davis R.W."/>
            <person name="Theologis A."/>
            <person name="Ecker J.R."/>
        </authorList>
    </citation>
    <scope>NUCLEOTIDE SEQUENCE [LARGE SCALE MRNA]</scope>
    <source>
        <strain>cv. Columbia</strain>
    </source>
</reference>
<accession>Q8VZG1</accession>
<accession>Q9ZV46</accession>
<protein>
    <recommendedName>
        <fullName>Diacylglycerol kinase 3</fullName>
        <shortName>AtDGK3</shortName>
        <shortName>DAG kinase 3</shortName>
        <ecNumber>2.7.1.107</ecNumber>
    </recommendedName>
    <alternativeName>
        <fullName>Diglyceride kinase 3</fullName>
        <shortName>DGK 3</shortName>
    </alternativeName>
</protein>